<sequence>MAALSSNWKKLQAKLKEESASKPSLKRKPETPATNPPTKKPKVQKSFTKTLKAAKSAQTSDKKKMGGVHSSKIEETAPGTSTSLALWAEDHDVSAEALAEAYNLGAKDNSMMLAAAKDKINHGLTEGIEIGKYIAIDCEMVGVGPGGHESALARVSIVDFHGVQIYDSYVKPKEKVTNWRTAVSGISQKSMRFARDFEEVQAEIDKLLRGRILVGHDLKHDLEALILSHPGKDIRDTAKFSGFKKYANGRKPSLRVLAQQLLGVEIQGGEHSSIEDARATMLLFRKHKSAFDVDHANRYAPKTASGGGQKGNKPKKKKK</sequence>
<evidence type="ECO:0000250" key="1"/>
<evidence type="ECO:0000256" key="2">
    <source>
        <dbReference type="SAM" id="MobiDB-lite"/>
    </source>
</evidence>
<evidence type="ECO:0000305" key="3"/>
<dbReference type="EC" id="3.1.-.-"/>
<dbReference type="EMBL" id="DS231664">
    <property type="protein sequence ID" value="ESU08868.1"/>
    <property type="molecule type" value="Genomic_DNA"/>
</dbReference>
<dbReference type="EMBL" id="HG970333">
    <property type="protein sequence ID" value="CEF79225.1"/>
    <property type="molecule type" value="Genomic_DNA"/>
</dbReference>
<dbReference type="RefSeq" id="XP_011321367.1">
    <property type="nucleotide sequence ID" value="XM_011323065.1"/>
</dbReference>
<dbReference type="SMR" id="Q4IEV5"/>
<dbReference type="FunCoup" id="Q4IEV5">
    <property type="interactions" value="805"/>
</dbReference>
<dbReference type="STRING" id="229533.Q4IEV5"/>
<dbReference type="GeneID" id="23551512"/>
<dbReference type="KEGG" id="fgr:FGSG_04253"/>
<dbReference type="VEuPathDB" id="FungiDB:FGRAMPH1_01G14847"/>
<dbReference type="eggNOG" id="KOG2249">
    <property type="taxonomic scope" value="Eukaryota"/>
</dbReference>
<dbReference type="HOGENOM" id="CLU_022453_2_1_1"/>
<dbReference type="InParanoid" id="Q4IEV5"/>
<dbReference type="OrthoDB" id="104366at110618"/>
<dbReference type="Proteomes" id="UP000070720">
    <property type="component" value="Chromosome 2"/>
</dbReference>
<dbReference type="GO" id="GO:0005634">
    <property type="term" value="C:nucleus"/>
    <property type="evidence" value="ECO:0007669"/>
    <property type="project" value="UniProtKB-SubCell"/>
</dbReference>
<dbReference type="GO" id="GO:0008408">
    <property type="term" value="F:3'-5' exonuclease activity"/>
    <property type="evidence" value="ECO:0007669"/>
    <property type="project" value="InterPro"/>
</dbReference>
<dbReference type="GO" id="GO:0003676">
    <property type="term" value="F:nucleic acid binding"/>
    <property type="evidence" value="ECO:0007669"/>
    <property type="project" value="InterPro"/>
</dbReference>
<dbReference type="GO" id="GO:0000027">
    <property type="term" value="P:ribosomal large subunit assembly"/>
    <property type="evidence" value="ECO:0007669"/>
    <property type="project" value="TreeGrafter"/>
</dbReference>
<dbReference type="GO" id="GO:0006364">
    <property type="term" value="P:rRNA processing"/>
    <property type="evidence" value="ECO:0007669"/>
    <property type="project" value="UniProtKB-KW"/>
</dbReference>
<dbReference type="CDD" id="cd06144">
    <property type="entry name" value="REX4_like"/>
    <property type="match status" value="1"/>
</dbReference>
<dbReference type="FunFam" id="3.30.420.10:FF:000007">
    <property type="entry name" value="Interferon-stimulated exonuclease gene 20"/>
    <property type="match status" value="1"/>
</dbReference>
<dbReference type="Gene3D" id="3.30.420.10">
    <property type="entry name" value="Ribonuclease H-like superfamily/Ribonuclease H"/>
    <property type="match status" value="1"/>
</dbReference>
<dbReference type="InterPro" id="IPR013520">
    <property type="entry name" value="Exonuclease_RNaseT/DNA_pol3"/>
</dbReference>
<dbReference type="InterPro" id="IPR037431">
    <property type="entry name" value="REX4_DEDDh_dom"/>
</dbReference>
<dbReference type="InterPro" id="IPR047021">
    <property type="entry name" value="REXO1/3/4-like"/>
</dbReference>
<dbReference type="InterPro" id="IPR012337">
    <property type="entry name" value="RNaseH-like_sf"/>
</dbReference>
<dbReference type="InterPro" id="IPR036397">
    <property type="entry name" value="RNaseH_sf"/>
</dbReference>
<dbReference type="PANTHER" id="PTHR12801:SF45">
    <property type="entry name" value="RNA EXONUCLEASE 4"/>
    <property type="match status" value="1"/>
</dbReference>
<dbReference type="PANTHER" id="PTHR12801">
    <property type="entry name" value="RNA EXONUCLEASE REXO1 / RECO3 FAMILY MEMBER-RELATED"/>
    <property type="match status" value="1"/>
</dbReference>
<dbReference type="Pfam" id="PF00929">
    <property type="entry name" value="RNase_T"/>
    <property type="match status" value="1"/>
</dbReference>
<dbReference type="SMART" id="SM00479">
    <property type="entry name" value="EXOIII"/>
    <property type="match status" value="1"/>
</dbReference>
<dbReference type="SUPFAM" id="SSF53098">
    <property type="entry name" value="Ribonuclease H-like"/>
    <property type="match status" value="1"/>
</dbReference>
<protein>
    <recommendedName>
        <fullName>RNA exonuclease 4</fullName>
        <ecNumber>3.1.-.-</ecNumber>
    </recommendedName>
</protein>
<gene>
    <name type="primary">REX4</name>
    <name type="ORF">FGRRES_04253</name>
    <name type="ORF">FGSG_04253</name>
</gene>
<comment type="function">
    <text evidence="1">Exoribonuclease involved in ribosome biosynthesis. Involved in the processing of ITS1, the internal transcribed spacer localized between the 18S and 5.8S rRNAs (By similarity).</text>
</comment>
<comment type="subcellular location">
    <subcellularLocation>
        <location evidence="1">Nucleus</location>
    </subcellularLocation>
</comment>
<comment type="similarity">
    <text evidence="3">Belongs to the REXO4 family.</text>
</comment>
<organism>
    <name type="scientific">Gibberella zeae (strain ATCC MYA-4620 / CBS 123657 / FGSC 9075 / NRRL 31084 / PH-1)</name>
    <name type="common">Wheat head blight fungus</name>
    <name type="synonym">Fusarium graminearum</name>
    <dbReference type="NCBI Taxonomy" id="229533"/>
    <lineage>
        <taxon>Eukaryota</taxon>
        <taxon>Fungi</taxon>
        <taxon>Dikarya</taxon>
        <taxon>Ascomycota</taxon>
        <taxon>Pezizomycotina</taxon>
        <taxon>Sordariomycetes</taxon>
        <taxon>Hypocreomycetidae</taxon>
        <taxon>Hypocreales</taxon>
        <taxon>Nectriaceae</taxon>
        <taxon>Fusarium</taxon>
    </lineage>
</organism>
<feature type="chain" id="PRO_0000131696" description="RNA exonuclease 4">
    <location>
        <begin position="1"/>
        <end position="319"/>
    </location>
</feature>
<feature type="domain" description="Exonuclease">
    <location>
        <begin position="132"/>
        <end position="293"/>
    </location>
</feature>
<feature type="region of interest" description="Disordered" evidence="2">
    <location>
        <begin position="1"/>
        <end position="75"/>
    </location>
</feature>
<feature type="region of interest" description="Disordered" evidence="2">
    <location>
        <begin position="295"/>
        <end position="319"/>
    </location>
</feature>
<accession>Q4IEV5</accession>
<accession>A0A0E0S6V0</accession>
<accession>V6R2L6</accession>
<proteinExistence type="inferred from homology"/>
<reference key="1">
    <citation type="journal article" date="2007" name="Science">
        <title>The Fusarium graminearum genome reveals a link between localized polymorphism and pathogen specialization.</title>
        <authorList>
            <person name="Cuomo C.A."/>
            <person name="Gueldener U."/>
            <person name="Xu J.-R."/>
            <person name="Trail F."/>
            <person name="Turgeon B.G."/>
            <person name="Di Pietro A."/>
            <person name="Walton J.D."/>
            <person name="Ma L.-J."/>
            <person name="Baker S.E."/>
            <person name="Rep M."/>
            <person name="Adam G."/>
            <person name="Antoniw J."/>
            <person name="Baldwin T."/>
            <person name="Calvo S.E."/>
            <person name="Chang Y.-L."/>
            <person name="DeCaprio D."/>
            <person name="Gale L.R."/>
            <person name="Gnerre S."/>
            <person name="Goswami R.S."/>
            <person name="Hammond-Kosack K."/>
            <person name="Harris L.J."/>
            <person name="Hilburn K."/>
            <person name="Kennell J.C."/>
            <person name="Kroken S."/>
            <person name="Magnuson J.K."/>
            <person name="Mannhaupt G."/>
            <person name="Mauceli E.W."/>
            <person name="Mewes H.-W."/>
            <person name="Mitterbauer R."/>
            <person name="Muehlbauer G."/>
            <person name="Muensterkoetter M."/>
            <person name="Nelson D."/>
            <person name="O'Donnell K."/>
            <person name="Ouellet T."/>
            <person name="Qi W."/>
            <person name="Quesneville H."/>
            <person name="Roncero M.I.G."/>
            <person name="Seong K.-Y."/>
            <person name="Tetko I.V."/>
            <person name="Urban M."/>
            <person name="Waalwijk C."/>
            <person name="Ward T.J."/>
            <person name="Yao J."/>
            <person name="Birren B.W."/>
            <person name="Kistler H.C."/>
        </authorList>
    </citation>
    <scope>NUCLEOTIDE SEQUENCE [LARGE SCALE GENOMIC DNA]</scope>
    <source>
        <strain>ATCC MYA-4620 / CBS 123657 / FGSC 9075 / NRRL 31084 / PH-1</strain>
    </source>
</reference>
<reference key="2">
    <citation type="journal article" date="2010" name="Nature">
        <title>Comparative genomics reveals mobile pathogenicity chromosomes in Fusarium.</title>
        <authorList>
            <person name="Ma L.-J."/>
            <person name="van der Does H.C."/>
            <person name="Borkovich K.A."/>
            <person name="Coleman J.J."/>
            <person name="Daboussi M.-J."/>
            <person name="Di Pietro A."/>
            <person name="Dufresne M."/>
            <person name="Freitag M."/>
            <person name="Grabherr M."/>
            <person name="Henrissat B."/>
            <person name="Houterman P.M."/>
            <person name="Kang S."/>
            <person name="Shim W.-B."/>
            <person name="Woloshuk C."/>
            <person name="Xie X."/>
            <person name="Xu J.-R."/>
            <person name="Antoniw J."/>
            <person name="Baker S.E."/>
            <person name="Bluhm B.H."/>
            <person name="Breakspear A."/>
            <person name="Brown D.W."/>
            <person name="Butchko R.A.E."/>
            <person name="Chapman S."/>
            <person name="Coulson R."/>
            <person name="Coutinho P.M."/>
            <person name="Danchin E.G.J."/>
            <person name="Diener A."/>
            <person name="Gale L.R."/>
            <person name="Gardiner D.M."/>
            <person name="Goff S."/>
            <person name="Hammond-Kosack K.E."/>
            <person name="Hilburn K."/>
            <person name="Hua-Van A."/>
            <person name="Jonkers W."/>
            <person name="Kazan K."/>
            <person name="Kodira C.D."/>
            <person name="Koehrsen M."/>
            <person name="Kumar L."/>
            <person name="Lee Y.-H."/>
            <person name="Li L."/>
            <person name="Manners J.M."/>
            <person name="Miranda-Saavedra D."/>
            <person name="Mukherjee M."/>
            <person name="Park G."/>
            <person name="Park J."/>
            <person name="Park S.-Y."/>
            <person name="Proctor R.H."/>
            <person name="Regev A."/>
            <person name="Ruiz-Roldan M.C."/>
            <person name="Sain D."/>
            <person name="Sakthikumar S."/>
            <person name="Sykes S."/>
            <person name="Schwartz D.C."/>
            <person name="Turgeon B.G."/>
            <person name="Wapinski I."/>
            <person name="Yoder O."/>
            <person name="Young S."/>
            <person name="Zeng Q."/>
            <person name="Zhou S."/>
            <person name="Galagan J."/>
            <person name="Cuomo C.A."/>
            <person name="Kistler H.C."/>
            <person name="Rep M."/>
        </authorList>
    </citation>
    <scope>GENOME REANNOTATION</scope>
    <source>
        <strain>ATCC MYA-4620 / CBS 123657 / FGSC 9075 / NRRL 31084 / PH-1</strain>
    </source>
</reference>
<reference key="3">
    <citation type="journal article" date="2015" name="BMC Genomics">
        <title>The completed genome sequence of the pathogenic ascomycete fungus Fusarium graminearum.</title>
        <authorList>
            <person name="King R."/>
            <person name="Urban M."/>
            <person name="Hammond-Kosack M.C.U."/>
            <person name="Hassani-Pak K."/>
            <person name="Hammond-Kosack K.E."/>
        </authorList>
    </citation>
    <scope>NUCLEOTIDE SEQUENCE [LARGE SCALE GENOMIC DNA]</scope>
    <source>
        <strain>ATCC MYA-4620 / CBS 123657 / FGSC 9075 / NRRL 31084 / PH-1</strain>
    </source>
</reference>
<keyword id="KW-0269">Exonuclease</keyword>
<keyword id="KW-0378">Hydrolase</keyword>
<keyword id="KW-0540">Nuclease</keyword>
<keyword id="KW-0539">Nucleus</keyword>
<keyword id="KW-1185">Reference proteome</keyword>
<keyword id="KW-0698">rRNA processing</keyword>
<name>REXO4_GIBZE</name>